<sequence length="297" mass="31503">MHRLLAWDAACLPPPPAAFRPMEVANFYYEPDCLAYGAKAARAAPRAPAAEPAIGEHERAIDFSPYLEPLAPAAADFAAPAPAHHDFLSDLFADDYGAKPSKKPSDYGYVSLGRAGAKAAPPACFPPPPPAALKAEPGFEPADCKRADDAPAMAAGFPFALRAYLGYQATPSGSSGSLSTSSSSSPPGTPSPADAKAAPAACFAGPPAAPAKAKAKKAVDKLSDEYKMRRERNNIAVRKSRDKAKMRNLETQHKVLELTAENERLQKKVEQLSRELSTLRNLFKQLPEPLLASAGHC</sequence>
<name>CEBPB_RAT</name>
<keyword id="KW-0007">Acetylation</keyword>
<keyword id="KW-0010">Activator</keyword>
<keyword id="KW-0024">Alternative initiation</keyword>
<keyword id="KW-0963">Cytoplasm</keyword>
<keyword id="KW-0221">Differentiation</keyword>
<keyword id="KW-0238">DNA-binding</keyword>
<keyword id="KW-0325">Glycoprotein</keyword>
<keyword id="KW-1017">Isopeptide bond</keyword>
<keyword id="KW-0488">Methylation</keyword>
<keyword id="KW-0539">Nucleus</keyword>
<keyword id="KW-0597">Phosphoprotein</keyword>
<keyword id="KW-1185">Reference proteome</keyword>
<keyword id="KW-0804">Transcription</keyword>
<keyword id="KW-0805">Transcription regulation</keyword>
<keyword id="KW-0832">Ubl conjugation</keyword>
<gene>
    <name evidence="13" type="primary">Cebpb</name>
    <name type="synonym">Crp2</name>
    <name evidence="11" type="synonym">Nf-il6</name>
    <name type="synonym">Sfb</name>
</gene>
<comment type="function">
    <text evidence="1 2 5 7 9 10">Important transcription factor regulating the expression of genes involved in immune and inflammatory responses (PubMed:8336793). Also plays a significant role in adipogenesis, as well as in the gluconeogenic pathway, liver regeneration, and hematopoiesis (PubMed:10635333). The consensus recognition site is 5'-T[TG]NNGNAA[TG]-3'. Its functional capacity is governed by protein interactions and post-translational protein modifications. During early embryogenesis, plays essential and redundant roles with CEBPA (By similarity). Has a promitotic effect on many cell types such as hepatocytes and adipocytes but has an antiproliferative effect on T-cells by repressing MYC expression, facilitating differentiation along the T-helper 2 lineage (PubMed:10635333). Binds to regulatory regions of several acute-phase and cytokines genes and plays a role in the regulation of acute-phase reaction and inflammation. Also plays a role in intracellular bacteria killing (By similarity). During adipogenesis, is rapidly expressed and, after activation by phosphorylation, induces CEBPA and PPARG, which turn on the series of adipocyte genes that give rise to the adipocyte phenotype. The delayed transactivation of the CEBPA and PPARG genes by CEBPB appears necessary to allow mitotic clonal expansion and thereby progression of terminal differentiation (By similarity). Essential for female reproduction because of a critical role in ovarian follicle development (By similarity). Restricts osteoclastogenesis: together with NFE2L1; represses expression of DSPP during odontoblast differentiation (PubMed:15308669).</text>
</comment>
<comment type="function">
    <molecule>Isoform 2</molecule>
    <text evidence="2">Essential for gene expression induction in activated macrophages. Plays a major role in immune responses such as CD4(+) T-cell response, granuloma formation and endotoxin shock. Not essential for intracellular bacteria killing.</text>
</comment>
<comment type="function">
    <molecule>Isoform 3</molecule>
    <text evidence="1 2 9">Acts as a dominant negative through heterodimerization with isoform 2 (PubMed:1934061). Promotes osteoblast differentiation and osteoclastogenesis (By similarity).</text>
</comment>
<comment type="subunit">
    <text evidence="1 2 6 7 8 9">Binds DNA as a homodimer and as a heterodimer (PubMed:1934061). Interacts with MYB; within the complex, MYB and CEBPB bind to different promoter regions. Interacts with ATF4. Binds DNA as a heterodimer with ATF4 (By similarity). Can form stable heterodimers with CEBPA, CEBPD, CEBPE and CEBPG (PubMed:1377818, PubMed:1884998). Interacts with SIX1 (By similarity). Isoform 2 and isoform 3 also form heterodimers (PubMed:1934061). Interacts with TRIM28 and PTGES2. Interacts with PRDM16. Interacts with CCDC85B. Forms a complex with THOC5. Interacts with ZNF638; this interaction increases transcriptional activation. Interacts with CIDEA and CIDEC; these interactions increase transcriptional activation of a subset of CEBPB downstream target genes. Interacts with DDIT3/CHOP. Interacts with EP300; recruits EP300 to chromatin. Interacts with RORA; the interaction disrupts interaction with EP300. Interacts (not methylated) with MED23, MED26, SMARCA2, SMARCB1 and SMARCC1 (By similarity). Interacts with KAT2A and KAT2B (By similarity). Interacts with ATF5; EP300 is required for ATF5 and CEBPB interaction and DNA binding (By similarity). Interacts with NFE2L1; the heterodimer represses expression of DSPP during odontoblast differentiation (PubMed:15308669).</text>
</comment>
<comment type="subcellular location">
    <subcellularLocation>
        <location evidence="1">Nucleus</location>
    </subcellularLocation>
    <subcellularLocation>
        <location evidence="1">Cytoplasm</location>
    </subcellularLocation>
    <text evidence="1 2">Translocates to the nucleus when phosphorylated at Ser-288. In T-cells when sumoylated drawn to pericentric heterochromatin thereby allowing proliferation (By similarity).</text>
</comment>
<comment type="alternative products">
    <event type="alternative initiation"/>
    <isoform>
        <id>P21272-1</id>
        <name>1</name>
        <name>FL</name>
        <sequence type="displayed"/>
    </isoform>
    <isoform>
        <id>P21272-2</id>
        <name>2</name>
        <name>LAP</name>
        <sequence type="described" ref="VSP_053316"/>
    </isoform>
    <isoform>
        <id>P21272-3</id>
        <name>3</name>
        <name>LIP</name>
        <sequence type="described" ref="VSP_053315"/>
    </isoform>
</comment>
<comment type="tissue specificity">
    <text>Liver and lung.</text>
</comment>
<comment type="PTM">
    <text evidence="1 2 10">Phosphorylated at Thr-189 by MAPK and CDK2, serves to prime phosphorylation at Thr-180 and Ser-185 by GSK3B and acquire DNA-binding as well as transactivation activities, required to induce adipogenesis. MAPK and CDK2 act sequentially to maintain Thr-189 in the primed phosphorylated state during mitotical cloning expansion and thereby progression of terminal differentiation (By similarity). Phosphorylation at Ser-105 enhances transactivation activity (PubMed:8336793). Phosphorylation at Ser-277 in response to calcium increases transactivation activity. Phosphorylated at Thr-189 by RPS6KA1 (By similarity).</text>
</comment>
<comment type="PTM">
    <text evidence="1">Methylated. Methylation at Arg-3 by CARM1 and at Lys-39 by EHMT2 inhibit transactivation activity. Methylation is probably inhibited by phosphorylation at Thr-189.</text>
</comment>
<comment type="PTM">
    <text evidence="1 2">Sumoylated by polymeric chains of SUMO2 or SUMO3 (By similarity). Sumoylation at Lys-134 is required for inhibition of T-cells proliferation. In adipocytes, sumoylation at Lys-134 by PIAS1 leads to ubiquitination and subsequent proteasomal degradation. Desumoylated by SENP2, which abolishes ubiquitination and stabilizes protein levels (By similarity).</text>
</comment>
<comment type="PTM">
    <text evidence="2">Ubiquitinated, leading to proteasomal degradation.</text>
</comment>
<comment type="PTM">
    <text evidence="2">O-glycosylated, glycosylation at Ser-181 and Ser-182 prevents phosphorylation on Thr-189, Ser-185 and Thr-180 and DNA binding activity which delays the adipocyte differentiation program.</text>
</comment>
<comment type="PTM">
    <text evidence="2">Acetylated. Acetylation at Lys-39 is an important and dynamic regulatory event that contributes to its ability to transactivate target genes, including those associated with adipogenesis and adipocyte function. Deacetylation by HDAC1 represses its transactivation activity. Acetylated by KAT2A and KAT2B within a cluster of lysine residues between amino acids 99-103, this acetylation is strongly induced by glucocorticoid treatment and enhances transactivation activity.</text>
</comment>
<comment type="miscellaneous">
    <molecule>Isoform 1</molecule>
    <text>Not detected in rat liver.</text>
</comment>
<comment type="miscellaneous">
    <molecule>Isoform 2</molecule>
    <text evidence="12">Major form in.</text>
</comment>
<comment type="similarity">
    <text evidence="12">Belongs to the bZIP family. C/EBP subfamily.</text>
</comment>
<evidence type="ECO:0000250" key="1">
    <source>
        <dbReference type="UniProtKB" id="P17676"/>
    </source>
</evidence>
<evidence type="ECO:0000250" key="2">
    <source>
        <dbReference type="UniProtKB" id="P28033"/>
    </source>
</evidence>
<evidence type="ECO:0000255" key="3">
    <source>
        <dbReference type="PROSITE-ProRule" id="PRU00978"/>
    </source>
</evidence>
<evidence type="ECO:0000256" key="4">
    <source>
        <dbReference type="SAM" id="MobiDB-lite"/>
    </source>
</evidence>
<evidence type="ECO:0000269" key="5">
    <source>
    </source>
</evidence>
<evidence type="ECO:0000269" key="6">
    <source>
    </source>
</evidence>
<evidence type="ECO:0000269" key="7">
    <source>
    </source>
</evidence>
<evidence type="ECO:0000269" key="8">
    <source>
    </source>
</evidence>
<evidence type="ECO:0000269" key="9">
    <source>
    </source>
</evidence>
<evidence type="ECO:0000269" key="10">
    <source>
    </source>
</evidence>
<evidence type="ECO:0000303" key="11">
    <source>
    </source>
</evidence>
<evidence type="ECO:0000305" key="12"/>
<evidence type="ECO:0000312" key="13">
    <source>
        <dbReference type="RGD" id="2327"/>
    </source>
</evidence>
<reference key="1">
    <citation type="journal article" date="1990" name="Cell">
        <title>IL-6DBP, a nuclear protein involved in interleukin-6 signal transduction, defines a new family of leucine zipper proteins related to C/EBP.</title>
        <authorList>
            <person name="Poli V."/>
            <person name="Mancini F.P."/>
            <person name="Cortese R."/>
        </authorList>
    </citation>
    <scope>NUCLEOTIDE SEQUENCE [MRNA] (ISOFORM 1)</scope>
</reference>
<reference key="2">
    <citation type="journal article" date="1990" name="Genes Dev.">
        <title>LAP, a novel member of the C/EBP gene family, encodes a liver-enriched transcriptional activator protein.</title>
        <authorList>
            <person name="Descombes P."/>
            <person name="Chojkier M."/>
            <person name="Lichtsteiner S."/>
            <person name="Falvey E."/>
            <person name="Schibler U."/>
        </authorList>
    </citation>
    <scope>NUCLEOTIDE SEQUENCE [GENOMIC DNA]</scope>
    <source>
        <strain>Lewis</strain>
        <tissue>Liver</tissue>
    </source>
</reference>
<reference key="3">
    <citation type="journal article" date="1992" name="Nucleic Acids Res.">
        <title>Molecular cloning of two C/EBP-related proteins that bind to the promoter and the enhancer of the alpha 1-fetoprotein gene. Further analysis of C/EBP beta and C/EBP gamma.</title>
        <authorList>
            <person name="Thomassin H."/>
            <person name="Hamel D."/>
            <person name="Bernier D."/>
            <person name="Guertin M."/>
            <person name="Belanger L."/>
        </authorList>
    </citation>
    <scope>NUCLEOTIDE SEQUENCE [MRNA] (ISOFORM 1)</scope>
    <scope>SUBUNIT</scope>
    <source>
        <strain>Sprague-Dawley</strain>
        <tissue>Liver</tissue>
    </source>
</reference>
<reference key="4">
    <citation type="journal article" date="2004" name="Genome Res.">
        <title>The status, quality, and expansion of the NIH full-length cDNA project: the Mammalian Gene Collection (MGC).</title>
        <authorList>
            <consortium name="The MGC Project Team"/>
        </authorList>
    </citation>
    <scope>NUCLEOTIDE SEQUENCE [LARGE SCALE MRNA] (ISOFORM 1)</scope>
    <source>
        <tissue>Placenta</tissue>
    </source>
</reference>
<reference key="5">
    <citation type="submission" date="1991-07" db="EMBL/GenBank/DDBJ databases">
        <title>SF-B (Silencer Factor B) that binds to a negative element in glutathione transferase P gene is most likely identical to an inducible trans-activator LAP/IL6-DBP.</title>
        <authorList>
            <person name="Imagawa M."/>
            <person name="Osada S."/>
            <person name="Koyama Y."/>
            <person name="Suzuki T."/>
            <person name="Hirom P.C."/>
            <person name="Diccianni M.B."/>
            <person name="Morimura S."/>
            <person name="Muramatsu M."/>
        </authorList>
    </citation>
    <scope>NUCLEOTIDE SEQUENCE [MRNA] OF 77-297 (ISOFORM 1)</scope>
    <source>
        <tissue>Liver</tissue>
    </source>
</reference>
<reference key="6">
    <citation type="journal article" date="1991" name="Genes Dev.">
        <title>A family of C/EBP-related proteins capable of forming covalently linked leucine zipper dimers in vitro.</title>
        <authorList>
            <person name="Williams S.C."/>
            <person name="Cantwell C.A."/>
            <person name="Johnson P.F."/>
        </authorList>
    </citation>
    <scope>NUCLEOTIDE SEQUENCE [GENOMIC DNA] OF 22-297</scope>
    <scope>SUBUNIT</scope>
    <scope>DNA-BINDING</scope>
    <source>
        <strain>Sprague-Dawley</strain>
        <tissue>Adipose tissue</tissue>
        <tissue>Liver</tissue>
        <tissue>Lung</tissue>
    </source>
</reference>
<reference key="7">
    <citation type="journal article" date="1991" name="Cell">
        <title>A liver-enriched transcriptional activator protein, LAP, and a transcriptional inhibitory protein, LIP, are translated from the same mRNA.</title>
        <authorList>
            <person name="Descombes P."/>
            <person name="Schibler U."/>
        </authorList>
    </citation>
    <scope>FUNCTION</scope>
    <scope>ALTERNATIVE SPLICING (ISOFORMS 1; 2 AND 3)</scope>
    <scope>DNA-BINDING</scope>
    <scope>DIMERIZATION</scope>
    <scope>SUBUNIT</scope>
</reference>
<reference key="8">
    <citation type="journal article" date="1993" name="Nature">
        <title>Transactivation by NF-IL6/LAP is enhanced by phosphorylation of its activation domain.</title>
        <authorList>
            <person name="Trautwein C."/>
            <person name="Caelles C."/>
            <person name="van der Geer P."/>
            <person name="Hunter T."/>
            <person name="Karin M."/>
            <person name="Chojkier M."/>
        </authorList>
    </citation>
    <scope>FUNCTION</scope>
    <scope>PHOSPHORYLATION AT SER-105</scope>
    <scope>MUTAGENESIS OF SER-105</scope>
</reference>
<reference key="9">
    <citation type="journal article" date="1999" name="Mol. Cell">
        <title>Phosphorylation of rat serine 105 or mouse threonine 217 in C/EBP beta is required for hepatocyte proliferation induced by TGF alpha.</title>
        <authorList>
            <person name="Buck M."/>
            <person name="Poli V."/>
            <person name="van der Geer P."/>
            <person name="Chojkier M."/>
            <person name="Hunter T."/>
        </authorList>
    </citation>
    <scope>FUNCTION</scope>
    <scope>PHOSPHORYLATION AT SER-105</scope>
    <scope>MUTAGENESIS OF SER-105</scope>
    <scope>TISSUE SPECIFICITY</scope>
</reference>
<reference key="10">
    <citation type="journal article" date="2004" name="J. Biol. Chem.">
        <title>The CCAAT enhancer-binding protein (C/EBP)beta and Nrf1 interact to regulate dentin sialophosphoprotein (DSPP) gene expression during odontoblast differentiation.</title>
        <authorList>
            <person name="Narayanan K."/>
            <person name="Ramachandran A."/>
            <person name="Peterson M.C."/>
            <person name="Hao J."/>
            <person name="Kolstoe A.B."/>
            <person name="Friedman A.D."/>
            <person name="George A."/>
        </authorList>
    </citation>
    <scope>FUNCTION</scope>
    <scope>INTERACTION WITH NFE2L1</scope>
</reference>
<reference key="11">
    <citation type="journal article" date="2012" name="Nat. Commun.">
        <title>Quantitative maps of protein phosphorylation sites across 14 different rat organs and tissues.</title>
        <authorList>
            <person name="Lundby A."/>
            <person name="Secher A."/>
            <person name="Lage K."/>
            <person name="Nordsborg N.B."/>
            <person name="Dmytriyev A."/>
            <person name="Lundby C."/>
            <person name="Olsen J.V."/>
        </authorList>
    </citation>
    <scope>IDENTIFICATION BY MASS SPECTROMETRY [LARGE SCALE ANALYSIS]</scope>
</reference>
<proteinExistence type="evidence at protein level"/>
<protein>
    <recommendedName>
        <fullName evidence="13">CCAAT/enhancer-binding protein beta</fullName>
        <shortName evidence="13">C/EBP beta</shortName>
    </recommendedName>
    <alternativeName>
        <fullName>C/EBP-related protein 2</fullName>
    </alternativeName>
    <alternativeName>
        <fullName>Interleukin-6-dependent-binding protein</fullName>
        <shortName>IL-6DBP</shortName>
    </alternativeName>
    <alternativeName>
        <fullName>Liver-enriched inhibitory protein</fullName>
        <shortName>LIP</shortName>
    </alternativeName>
    <alternativeName>
        <fullName>Liver-enriched transcriptional activator</fullName>
        <shortName>LAP</shortName>
    </alternativeName>
    <alternativeName>
        <fullName>Silencer factor B</fullName>
        <shortName>SF-B</shortName>
    </alternativeName>
</protein>
<accession>P21272</accession>
<accession>A2VD03</accession>
<dbReference type="EMBL" id="M57235">
    <property type="protein sequence ID" value="AAA19669.1"/>
    <property type="molecule type" value="mRNA"/>
</dbReference>
<dbReference type="EMBL" id="X54626">
    <property type="protein sequence ID" value="CAA38443.1"/>
    <property type="molecule type" value="Genomic_DNA"/>
</dbReference>
<dbReference type="EMBL" id="BC129071">
    <property type="protein sequence ID" value="AAI29072.1"/>
    <property type="molecule type" value="mRNA"/>
</dbReference>
<dbReference type="EMBL" id="X60769">
    <property type="protein sequence ID" value="CAA43179.1"/>
    <property type="molecule type" value="mRNA"/>
</dbReference>
<dbReference type="EMBL" id="AY056052">
    <property type="protein sequence ID" value="AAA40972.1"/>
    <property type="molecule type" value="Genomic_DNA"/>
</dbReference>
<dbReference type="PIR" id="A35914">
    <property type="entry name" value="A35914"/>
</dbReference>
<dbReference type="RefSeq" id="NP_001288644.1">
    <molecule id="P21272-2"/>
    <property type="nucleotide sequence ID" value="NM_001301715.1"/>
</dbReference>
<dbReference type="RefSeq" id="NP_001288649.1">
    <molecule id="P21272-3"/>
    <property type="nucleotide sequence ID" value="NM_001301720.1"/>
</dbReference>
<dbReference type="RefSeq" id="NP_077039.3">
    <molecule id="P21272-1"/>
    <property type="nucleotide sequence ID" value="NM_024125.5"/>
</dbReference>
<dbReference type="SMR" id="P21272"/>
<dbReference type="BioGRID" id="246438">
    <property type="interactions" value="1305"/>
</dbReference>
<dbReference type="ComplexPortal" id="CPX-62">
    <property type="entry name" value="bZIP transcription factor complex, Cebpb-Ddit3"/>
</dbReference>
<dbReference type="ComplexPortal" id="CPX-63">
    <property type="entry name" value="bZIP transcription factor complex, Cebpb-Cebpb"/>
</dbReference>
<dbReference type="DIP" id="DIP-28139N"/>
<dbReference type="FunCoup" id="P21272">
    <property type="interactions" value="181"/>
</dbReference>
<dbReference type="IntAct" id="P21272">
    <property type="interactions" value="2"/>
</dbReference>
<dbReference type="STRING" id="10116.ENSRNOP00000071427"/>
<dbReference type="GlyCosmos" id="P21272">
    <property type="glycosylation" value="2 sites, No reported glycans"/>
</dbReference>
<dbReference type="GlyGen" id="P21272">
    <property type="glycosylation" value="5 sites, 1 O-linked glycan (1 site)"/>
</dbReference>
<dbReference type="iPTMnet" id="P21272"/>
<dbReference type="PhosphoSitePlus" id="P21272"/>
<dbReference type="PaxDb" id="10116-ENSRNOP00000065222"/>
<dbReference type="PeptideAtlas" id="P21272"/>
<dbReference type="GeneID" id="24253"/>
<dbReference type="KEGG" id="rno:24253"/>
<dbReference type="UCSC" id="RGD:2327">
    <molecule id="P21272-1"/>
    <property type="organism name" value="rat"/>
</dbReference>
<dbReference type="AGR" id="RGD:2327"/>
<dbReference type="CTD" id="1051"/>
<dbReference type="RGD" id="2327">
    <property type="gene designation" value="Cebpb"/>
</dbReference>
<dbReference type="VEuPathDB" id="HostDB:ENSRNOG00000057347"/>
<dbReference type="eggNOG" id="KOG3119">
    <property type="taxonomic scope" value="Eukaryota"/>
</dbReference>
<dbReference type="HOGENOM" id="CLU_043327_1_0_1"/>
<dbReference type="InParanoid" id="P21272"/>
<dbReference type="OrthoDB" id="89118at9989"/>
<dbReference type="PhylomeDB" id="P21272"/>
<dbReference type="TreeFam" id="TF105008"/>
<dbReference type="Reactome" id="R-RNO-2559582">
    <property type="pathway name" value="Senescence-Associated Secretory Phenotype (SASP)"/>
</dbReference>
<dbReference type="PRO" id="PR:P21272"/>
<dbReference type="Proteomes" id="UP000002494">
    <property type="component" value="Chromosome 3"/>
</dbReference>
<dbReference type="Bgee" id="ENSRNOG00000057347">
    <property type="expression patterns" value="Expressed in liver and 19 other cell types or tissues"/>
</dbReference>
<dbReference type="GO" id="GO:1990647">
    <property type="term" value="C:C/EBP complex"/>
    <property type="evidence" value="ECO:0000266"/>
    <property type="project" value="RGD"/>
</dbReference>
<dbReference type="GO" id="GO:0036488">
    <property type="term" value="C:CHOP-C/EBP complex"/>
    <property type="evidence" value="ECO:0000353"/>
    <property type="project" value="ParkinsonsUK-UCL"/>
</dbReference>
<dbReference type="GO" id="GO:0000785">
    <property type="term" value="C:chromatin"/>
    <property type="evidence" value="ECO:0000266"/>
    <property type="project" value="RGD"/>
</dbReference>
<dbReference type="GO" id="GO:0000779">
    <property type="term" value="C:condensed chromosome, centromeric region"/>
    <property type="evidence" value="ECO:0000266"/>
    <property type="project" value="RGD"/>
</dbReference>
<dbReference type="GO" id="GO:0005737">
    <property type="term" value="C:cytoplasm"/>
    <property type="evidence" value="ECO:0000266"/>
    <property type="project" value="RGD"/>
</dbReference>
<dbReference type="GO" id="GO:0016363">
    <property type="term" value="C:nuclear matrix"/>
    <property type="evidence" value="ECO:0000314"/>
    <property type="project" value="RGD"/>
</dbReference>
<dbReference type="GO" id="GO:0005654">
    <property type="term" value="C:nucleoplasm"/>
    <property type="evidence" value="ECO:0000304"/>
    <property type="project" value="Reactome"/>
</dbReference>
<dbReference type="GO" id="GO:0005634">
    <property type="term" value="C:nucleus"/>
    <property type="evidence" value="ECO:0000314"/>
    <property type="project" value="ParkinsonsUK-UCL"/>
</dbReference>
<dbReference type="GO" id="GO:0090575">
    <property type="term" value="C:RNA polymerase II transcription regulator complex"/>
    <property type="evidence" value="ECO:0000266"/>
    <property type="project" value="RGD"/>
</dbReference>
<dbReference type="GO" id="GO:0003682">
    <property type="term" value="F:chromatin binding"/>
    <property type="evidence" value="ECO:0000266"/>
    <property type="project" value="RGD"/>
</dbReference>
<dbReference type="GO" id="GO:0031490">
    <property type="term" value="F:chromatin DNA binding"/>
    <property type="evidence" value="ECO:0000266"/>
    <property type="project" value="RGD"/>
</dbReference>
<dbReference type="GO" id="GO:0003677">
    <property type="term" value="F:DNA binding"/>
    <property type="evidence" value="ECO:0000314"/>
    <property type="project" value="UniProtKB"/>
</dbReference>
<dbReference type="GO" id="GO:0001228">
    <property type="term" value="F:DNA-binding transcription activator activity, RNA polymerase II-specific"/>
    <property type="evidence" value="ECO:0000314"/>
    <property type="project" value="NTNU_SB"/>
</dbReference>
<dbReference type="GO" id="GO:0000981">
    <property type="term" value="F:DNA-binding transcription factor activity, RNA polymerase II-specific"/>
    <property type="evidence" value="ECO:0000250"/>
    <property type="project" value="UniProtKB"/>
</dbReference>
<dbReference type="GO" id="GO:0140297">
    <property type="term" value="F:DNA-binding transcription factor binding"/>
    <property type="evidence" value="ECO:0000353"/>
    <property type="project" value="RGD"/>
</dbReference>
<dbReference type="GO" id="GO:0001227">
    <property type="term" value="F:DNA-binding transcription repressor activity, RNA polymerase II-specific"/>
    <property type="evidence" value="ECO:0000314"/>
    <property type="project" value="UniProtKB"/>
</dbReference>
<dbReference type="GO" id="GO:0035035">
    <property type="term" value="F:histone acetyltransferase binding"/>
    <property type="evidence" value="ECO:0000266"/>
    <property type="project" value="RGD"/>
</dbReference>
<dbReference type="GO" id="GO:0042826">
    <property type="term" value="F:histone deacetylase binding"/>
    <property type="evidence" value="ECO:0000266"/>
    <property type="project" value="RGD"/>
</dbReference>
<dbReference type="GO" id="GO:0042802">
    <property type="term" value="F:identical protein binding"/>
    <property type="evidence" value="ECO:0000266"/>
    <property type="project" value="RGD"/>
</dbReference>
<dbReference type="GO" id="GO:0019900">
    <property type="term" value="F:kinase binding"/>
    <property type="evidence" value="ECO:0000266"/>
    <property type="project" value="RGD"/>
</dbReference>
<dbReference type="GO" id="GO:0035259">
    <property type="term" value="F:nuclear glucocorticoid receptor binding"/>
    <property type="evidence" value="ECO:0000353"/>
    <property type="project" value="RGD"/>
</dbReference>
<dbReference type="GO" id="GO:0046982">
    <property type="term" value="F:protein heterodimerization activity"/>
    <property type="evidence" value="ECO:0000353"/>
    <property type="project" value="UniProtKB"/>
</dbReference>
<dbReference type="GO" id="GO:0042803">
    <property type="term" value="F:protein homodimerization activity"/>
    <property type="evidence" value="ECO:0000314"/>
    <property type="project" value="UniProtKB"/>
</dbReference>
<dbReference type="GO" id="GO:0000978">
    <property type="term" value="F:RNA polymerase II cis-regulatory region sequence-specific DNA binding"/>
    <property type="evidence" value="ECO:0000314"/>
    <property type="project" value="NTNU_SB"/>
</dbReference>
<dbReference type="GO" id="GO:0000979">
    <property type="term" value="F:RNA polymerase II core promoter sequence-specific DNA binding"/>
    <property type="evidence" value="ECO:0000266"/>
    <property type="project" value="RGD"/>
</dbReference>
<dbReference type="GO" id="GO:0000977">
    <property type="term" value="F:RNA polymerase II transcription regulatory region sequence-specific DNA binding"/>
    <property type="evidence" value="ECO:0000266"/>
    <property type="project" value="RGD"/>
</dbReference>
<dbReference type="GO" id="GO:0061629">
    <property type="term" value="F:RNA polymerase II-specific DNA-binding transcription factor binding"/>
    <property type="evidence" value="ECO:0000353"/>
    <property type="project" value="ParkinsonsUK-UCL"/>
</dbReference>
<dbReference type="GO" id="GO:0043565">
    <property type="term" value="F:sequence-specific DNA binding"/>
    <property type="evidence" value="ECO:0000314"/>
    <property type="project" value="RGD"/>
</dbReference>
<dbReference type="GO" id="GO:1990837">
    <property type="term" value="F:sequence-specific double-stranded DNA binding"/>
    <property type="evidence" value="ECO:0000266"/>
    <property type="project" value="RGD"/>
</dbReference>
<dbReference type="GO" id="GO:0000976">
    <property type="term" value="F:transcription cis-regulatory region binding"/>
    <property type="evidence" value="ECO:0000266"/>
    <property type="project" value="RGD"/>
</dbReference>
<dbReference type="GO" id="GO:0044389">
    <property type="term" value="F:ubiquitin-like protein ligase binding"/>
    <property type="evidence" value="ECO:0000266"/>
    <property type="project" value="RGD"/>
</dbReference>
<dbReference type="GO" id="GO:0050873">
    <property type="term" value="P:brown fat cell differentiation"/>
    <property type="evidence" value="ECO:0000266"/>
    <property type="project" value="RGD"/>
</dbReference>
<dbReference type="GO" id="GO:0071230">
    <property type="term" value="P:cellular response to amino acid stimulus"/>
    <property type="evidence" value="ECO:0000266"/>
    <property type="project" value="RGD"/>
</dbReference>
<dbReference type="GO" id="GO:0071347">
    <property type="term" value="P:cellular response to interleukin-1"/>
    <property type="evidence" value="ECO:0000314"/>
    <property type="project" value="RGD"/>
</dbReference>
<dbReference type="GO" id="GO:0071222">
    <property type="term" value="P:cellular response to lipopolysaccharide"/>
    <property type="evidence" value="ECO:0000314"/>
    <property type="project" value="RGD"/>
</dbReference>
<dbReference type="GO" id="GO:0042742">
    <property type="term" value="P:defense response to bacterium"/>
    <property type="evidence" value="ECO:0000250"/>
    <property type="project" value="UniProtKB"/>
</dbReference>
<dbReference type="GO" id="GO:0001892">
    <property type="term" value="P:embryonic placenta development"/>
    <property type="evidence" value="ECO:0000266"/>
    <property type="project" value="RGD"/>
</dbReference>
<dbReference type="GO" id="GO:0045444">
    <property type="term" value="P:fat cell differentiation"/>
    <property type="evidence" value="ECO:0000266"/>
    <property type="project" value="RGD"/>
</dbReference>
<dbReference type="GO" id="GO:0002432">
    <property type="term" value="P:granuloma formation"/>
    <property type="evidence" value="ECO:0000250"/>
    <property type="project" value="UniProtKB"/>
</dbReference>
<dbReference type="GO" id="GO:0072574">
    <property type="term" value="P:hepatocyte proliferation"/>
    <property type="evidence" value="ECO:0000314"/>
    <property type="project" value="UniProtKB"/>
</dbReference>
<dbReference type="GO" id="GO:0070059">
    <property type="term" value="P:intrinsic apoptotic signaling pathway in response to endoplasmic reticulum stress"/>
    <property type="evidence" value="ECO:0000266"/>
    <property type="project" value="RGD"/>
</dbReference>
<dbReference type="GO" id="GO:0001889">
    <property type="term" value="P:liver development"/>
    <property type="evidence" value="ECO:0000270"/>
    <property type="project" value="RGD"/>
</dbReference>
<dbReference type="GO" id="GO:0097421">
    <property type="term" value="P:liver regeneration"/>
    <property type="evidence" value="ECO:0000250"/>
    <property type="project" value="UniProtKB"/>
</dbReference>
<dbReference type="GO" id="GO:0060644">
    <property type="term" value="P:mammary gland epithelial cell differentiation"/>
    <property type="evidence" value="ECO:0000266"/>
    <property type="project" value="RGD"/>
</dbReference>
<dbReference type="GO" id="GO:0033598">
    <property type="term" value="P:mammary gland epithelial cell proliferation"/>
    <property type="evidence" value="ECO:0000266"/>
    <property type="project" value="RGD"/>
</dbReference>
<dbReference type="GO" id="GO:0007613">
    <property type="term" value="P:memory"/>
    <property type="evidence" value="ECO:0000270"/>
    <property type="project" value="RGD"/>
</dbReference>
<dbReference type="GO" id="GO:0045892">
    <property type="term" value="P:negative regulation of DNA-templated transcription"/>
    <property type="evidence" value="ECO:0000266"/>
    <property type="project" value="RGD"/>
</dbReference>
<dbReference type="GO" id="GO:0043524">
    <property type="term" value="P:negative regulation of neuron apoptotic process"/>
    <property type="evidence" value="ECO:0000266"/>
    <property type="project" value="RGD"/>
</dbReference>
<dbReference type="GO" id="GO:0042130">
    <property type="term" value="P:negative regulation of T cell proliferation"/>
    <property type="evidence" value="ECO:0000250"/>
    <property type="project" value="UniProtKB"/>
</dbReference>
<dbReference type="GO" id="GO:0000122">
    <property type="term" value="P:negative regulation of transcription by RNA polymerase II"/>
    <property type="evidence" value="ECO:0000314"/>
    <property type="project" value="UniProtKB"/>
</dbReference>
<dbReference type="GO" id="GO:0030182">
    <property type="term" value="P:neuron differentiation"/>
    <property type="evidence" value="ECO:0000266"/>
    <property type="project" value="RGD"/>
</dbReference>
<dbReference type="GO" id="GO:0001541">
    <property type="term" value="P:ovarian follicle development"/>
    <property type="evidence" value="ECO:0000250"/>
    <property type="project" value="UniProtKB"/>
</dbReference>
<dbReference type="GO" id="GO:0070169">
    <property type="term" value="P:positive regulation of biomineral tissue development"/>
    <property type="evidence" value="ECO:0000266"/>
    <property type="project" value="RGD"/>
</dbReference>
<dbReference type="GO" id="GO:0120162">
    <property type="term" value="P:positive regulation of cold-induced thermogenesis"/>
    <property type="evidence" value="ECO:0000250"/>
    <property type="project" value="YuBioLab"/>
</dbReference>
<dbReference type="GO" id="GO:0045893">
    <property type="term" value="P:positive regulation of DNA-templated transcription"/>
    <property type="evidence" value="ECO:0000266"/>
    <property type="project" value="RGD"/>
</dbReference>
<dbReference type="GO" id="GO:0045600">
    <property type="term" value="P:positive regulation of fat cell differentiation"/>
    <property type="evidence" value="ECO:0000250"/>
    <property type="project" value="UniProtKB"/>
</dbReference>
<dbReference type="GO" id="GO:0010628">
    <property type="term" value="P:positive regulation of gene expression"/>
    <property type="evidence" value="ECO:0000315"/>
    <property type="project" value="ARUK-UCL"/>
</dbReference>
<dbReference type="GO" id="GO:0050729">
    <property type="term" value="P:positive regulation of inflammatory response"/>
    <property type="evidence" value="ECO:0000266"/>
    <property type="project" value="RGD"/>
</dbReference>
<dbReference type="GO" id="GO:0032753">
    <property type="term" value="P:positive regulation of interleukin-4 production"/>
    <property type="evidence" value="ECO:0000250"/>
    <property type="project" value="UniProtKB"/>
</dbReference>
<dbReference type="GO" id="GO:0045669">
    <property type="term" value="P:positive regulation of osteoblast differentiation"/>
    <property type="evidence" value="ECO:0000266"/>
    <property type="project" value="RGD"/>
</dbReference>
<dbReference type="GO" id="GO:2000120">
    <property type="term" value="P:positive regulation of sodium-dependent phosphate transport"/>
    <property type="evidence" value="ECO:0000266"/>
    <property type="project" value="RGD"/>
</dbReference>
<dbReference type="GO" id="GO:0045944">
    <property type="term" value="P:positive regulation of transcription by RNA polymerase II"/>
    <property type="evidence" value="ECO:0000314"/>
    <property type="project" value="NTNU_SB"/>
</dbReference>
<dbReference type="GO" id="GO:0045595">
    <property type="term" value="P:regulation of cell differentiation"/>
    <property type="evidence" value="ECO:0000318"/>
    <property type="project" value="GO_Central"/>
</dbReference>
<dbReference type="GO" id="GO:2001198">
    <property type="term" value="P:regulation of dendritic cell differentiation"/>
    <property type="evidence" value="ECO:0000266"/>
    <property type="project" value="RGD"/>
</dbReference>
<dbReference type="GO" id="GO:0006355">
    <property type="term" value="P:regulation of DNA-templated transcription"/>
    <property type="evidence" value="ECO:0000250"/>
    <property type="project" value="UniProtKB"/>
</dbReference>
<dbReference type="GO" id="GO:0032675">
    <property type="term" value="P:regulation of interleukin-6 production"/>
    <property type="evidence" value="ECO:0000266"/>
    <property type="project" value="RGD"/>
</dbReference>
<dbReference type="GO" id="GO:1901329">
    <property type="term" value="P:regulation of odontoblast differentiation"/>
    <property type="evidence" value="ECO:0000314"/>
    <property type="project" value="UniProtKB"/>
</dbReference>
<dbReference type="GO" id="GO:0045670">
    <property type="term" value="P:regulation of osteoclast differentiation"/>
    <property type="evidence" value="ECO:0000250"/>
    <property type="project" value="UniProtKB"/>
</dbReference>
<dbReference type="GO" id="GO:0006357">
    <property type="term" value="P:regulation of transcription by RNA polymerase II"/>
    <property type="evidence" value="ECO:0000250"/>
    <property type="project" value="UniProtKB"/>
</dbReference>
<dbReference type="GO" id="GO:0034976">
    <property type="term" value="P:response to endoplasmic reticulum stress"/>
    <property type="evidence" value="ECO:0000250"/>
    <property type="project" value="UniProtKB"/>
</dbReference>
<dbReference type="GO" id="GO:0032496">
    <property type="term" value="P:response to lipopolysaccharide"/>
    <property type="evidence" value="ECO:0000266"/>
    <property type="project" value="RGD"/>
</dbReference>
<dbReference type="GO" id="GO:0035711">
    <property type="term" value="P:T-helper 1 cell activation"/>
    <property type="evidence" value="ECO:0000250"/>
    <property type="project" value="UniProtKB"/>
</dbReference>
<dbReference type="GO" id="GO:0006366">
    <property type="term" value="P:transcription by RNA polymerase II"/>
    <property type="evidence" value="ECO:0000266"/>
    <property type="project" value="RGD"/>
</dbReference>
<dbReference type="CDD" id="cd14712">
    <property type="entry name" value="bZIP_CEBPB"/>
    <property type="match status" value="1"/>
</dbReference>
<dbReference type="FunFam" id="1.20.5.170:FF:000028">
    <property type="entry name" value="CCAAT/enhancer-binding protein beta"/>
    <property type="match status" value="1"/>
</dbReference>
<dbReference type="Gene3D" id="1.20.5.170">
    <property type="match status" value="1"/>
</dbReference>
<dbReference type="InterPro" id="IPR004827">
    <property type="entry name" value="bZIP"/>
</dbReference>
<dbReference type="InterPro" id="IPR046347">
    <property type="entry name" value="bZIP_sf"/>
</dbReference>
<dbReference type="InterPro" id="IPR031106">
    <property type="entry name" value="C/EBP"/>
</dbReference>
<dbReference type="InterPro" id="IPR016468">
    <property type="entry name" value="C/EBP_chordates"/>
</dbReference>
<dbReference type="PANTHER" id="PTHR23334">
    <property type="entry name" value="CCAAT/ENHANCER BINDING PROTEIN"/>
    <property type="match status" value="1"/>
</dbReference>
<dbReference type="PANTHER" id="PTHR23334:SF21">
    <property type="entry name" value="CCAAT_ENHANCER-BINDING PROTEIN BETA"/>
    <property type="match status" value="1"/>
</dbReference>
<dbReference type="Pfam" id="PF07716">
    <property type="entry name" value="bZIP_2"/>
    <property type="match status" value="1"/>
</dbReference>
<dbReference type="PIRSF" id="PIRSF005879">
    <property type="entry name" value="CCAAT/enhancer-binding"/>
    <property type="match status" value="1"/>
</dbReference>
<dbReference type="SMART" id="SM00338">
    <property type="entry name" value="BRLZ"/>
    <property type="match status" value="1"/>
</dbReference>
<dbReference type="SUPFAM" id="SSF57959">
    <property type="entry name" value="Leucine zipper domain"/>
    <property type="match status" value="1"/>
</dbReference>
<dbReference type="PROSITE" id="PS50217">
    <property type="entry name" value="BZIP"/>
    <property type="match status" value="1"/>
</dbReference>
<organism>
    <name type="scientific">Rattus norvegicus</name>
    <name type="common">Rat</name>
    <dbReference type="NCBI Taxonomy" id="10116"/>
    <lineage>
        <taxon>Eukaryota</taxon>
        <taxon>Metazoa</taxon>
        <taxon>Chordata</taxon>
        <taxon>Craniata</taxon>
        <taxon>Vertebrata</taxon>
        <taxon>Euteleostomi</taxon>
        <taxon>Mammalia</taxon>
        <taxon>Eutheria</taxon>
        <taxon>Euarchontoglires</taxon>
        <taxon>Glires</taxon>
        <taxon>Rodentia</taxon>
        <taxon>Myomorpha</taxon>
        <taxon>Muroidea</taxon>
        <taxon>Muridae</taxon>
        <taxon>Murinae</taxon>
        <taxon>Rattus</taxon>
    </lineage>
</organism>
<feature type="chain" id="PRO_0000076619" description="CCAAT/enhancer-binding protein beta">
    <location>
        <begin position="1"/>
        <end position="297"/>
    </location>
</feature>
<feature type="domain" description="bZIP" evidence="3">
    <location>
        <begin position="223"/>
        <end position="286"/>
    </location>
</feature>
<feature type="region of interest" description="Required for Lys-134 sumoylation" evidence="1">
    <location>
        <begin position="1"/>
        <end position="22"/>
    </location>
</feature>
<feature type="region of interest" description="Required for MYC transcriptional repression" evidence="2">
    <location>
        <begin position="22"/>
        <end position="105"/>
    </location>
</feature>
<feature type="region of interest" description="Disordered" evidence="4">
    <location>
        <begin position="172"/>
        <end position="201"/>
    </location>
</feature>
<feature type="region of interest" description="Basic motif" evidence="3">
    <location>
        <begin position="227"/>
        <end position="247"/>
    </location>
</feature>
<feature type="region of interest" description="Leucine-zipper" evidence="3">
    <location>
        <begin position="249"/>
        <end position="256"/>
    </location>
</feature>
<feature type="modified residue" description="Asymmetric dimethylarginine; by CARM1" evidence="2">
    <location>
        <position position="3"/>
    </location>
</feature>
<feature type="modified residue" description="N6-acetyllysine; alternate" evidence="2">
    <location>
        <position position="39"/>
    </location>
</feature>
<feature type="modified residue" description="N6-methylated lysine; alternate" evidence="2">
    <location>
        <position position="39"/>
    </location>
</feature>
<feature type="modified residue" description="N6-acetyllysine; by KAT2A and KAT2B" evidence="2">
    <location>
        <position position="99"/>
    </location>
</feature>
<feature type="modified residue" description="N6-acetyllysine; by KAT2A and KAT2B" evidence="2">
    <location>
        <position position="102"/>
    </location>
</feature>
<feature type="modified residue" description="N6-acetyllysine; by KAT2A and KAT2B; alternate" evidence="2">
    <location>
        <position position="103"/>
    </location>
</feature>
<feature type="modified residue" description="Phosphoserine; by RPS6KA1 and PKC/PRKCA" evidence="5 10">
    <location>
        <position position="105"/>
    </location>
</feature>
<feature type="modified residue" description="Phosphothreonine; by GSK3-beta" evidence="2">
    <location>
        <position position="180"/>
    </location>
</feature>
<feature type="modified residue" description="Phosphoserine; by GSK3-beta" evidence="2">
    <location>
        <position position="185"/>
    </location>
</feature>
<feature type="modified residue" description="Phosphothreonine; by RPS6KA1, CDK2 and MAPK" evidence="1">
    <location>
        <position position="189"/>
    </location>
</feature>
<feature type="modified residue" description="Phosphoserine; by PKC/PRKCA" evidence="1">
    <location>
        <position position="240"/>
    </location>
</feature>
<feature type="modified residue" description="Phosphoserine; by CaMK2" evidence="2">
    <location>
        <position position="277"/>
    </location>
</feature>
<feature type="glycosylation site" description="O-linked (GlcNAc) serine" evidence="2">
    <location>
        <position position="181"/>
    </location>
</feature>
<feature type="glycosylation site" description="O-linked (GlcNAc) serine" evidence="2">
    <location>
        <position position="182"/>
    </location>
</feature>
<feature type="cross-link" description="Glycyl lysine isopeptide (Lys-Gly) (interchain with G-Cter in SUMO2); alternate" evidence="1">
    <location>
        <position position="103"/>
    </location>
</feature>
<feature type="cross-link" description="Glycyl lysine isopeptide (Lys-Gly) (interchain with G-Cter in SUMO); alternate" evidence="1 2">
    <location>
        <position position="134"/>
    </location>
</feature>
<feature type="cross-link" description="Glycyl lysine isopeptide (Lys-Gly) (interchain with G-Cter in SUMO2); alternate" evidence="1">
    <location>
        <position position="134"/>
    </location>
</feature>
<feature type="cross-link" description="Glycyl lysine isopeptide (Lys-Gly) (interchain with G-Cter in SUMO2)" evidence="1">
    <location>
        <position position="145"/>
    </location>
</feature>
<feature type="cross-link" description="Glycyl lysine isopeptide (Lys-Gly) (interchain with G-Cter in SUMO2)" evidence="1">
    <location>
        <position position="212"/>
    </location>
</feature>
<feature type="cross-link" description="Glycyl lysine isopeptide (Lys-Gly) (interchain with G-Cter in SUMO2)" evidence="1">
    <location>
        <position position="214"/>
    </location>
</feature>
<feature type="cross-link" description="Glycyl lysine isopeptide (Lys-Gly) (interchain with G-Cter in SUMO2)" evidence="1">
    <location>
        <position position="284"/>
    </location>
</feature>
<feature type="splice variant" id="VSP_053315" description="In isoform 3." evidence="12">
    <location>
        <begin position="1"/>
        <end position="152"/>
    </location>
</feature>
<feature type="splice variant" id="VSP_053316" description="In isoform 2." evidence="12">
    <location>
        <begin position="1"/>
        <end position="21"/>
    </location>
</feature>
<feature type="mutagenesis site" description="No effect on DNA-binding. Loss of transactivation activity. Loss of hepatocyte proliferation induction by TGFA." evidence="5 10">
    <original>S</original>
    <variation>A</variation>
    <location>
        <position position="105"/>
    </location>
</feature>
<feature type="mutagenesis site" description="No effect on DNA-binding. Increases transactivation activity." evidence="10">
    <original>S</original>
    <variation>D</variation>
    <location>
        <position position="105"/>
    </location>
</feature>